<gene>
    <name evidence="1" type="primary">rplX</name>
    <name type="ordered locus">Ldb0407</name>
</gene>
<accession>Q1GBK7</accession>
<reference key="1">
    <citation type="journal article" date="2006" name="Proc. Natl. Acad. Sci. U.S.A.">
        <title>The complete genome sequence of Lactobacillus bulgaricus reveals extensive and ongoing reductive evolution.</title>
        <authorList>
            <person name="van de Guchte M."/>
            <person name="Penaud S."/>
            <person name="Grimaldi C."/>
            <person name="Barbe V."/>
            <person name="Bryson K."/>
            <person name="Nicolas P."/>
            <person name="Robert C."/>
            <person name="Oztas S."/>
            <person name="Mangenot S."/>
            <person name="Couloux A."/>
            <person name="Loux V."/>
            <person name="Dervyn R."/>
            <person name="Bossy R."/>
            <person name="Bolotin A."/>
            <person name="Batto J.-M."/>
            <person name="Walunas T."/>
            <person name="Gibrat J.-F."/>
            <person name="Bessieres P."/>
            <person name="Weissenbach J."/>
            <person name="Ehrlich S.D."/>
            <person name="Maguin E."/>
        </authorList>
    </citation>
    <scope>NUCLEOTIDE SEQUENCE [LARGE SCALE GENOMIC DNA]</scope>
    <source>
        <strain>ATCC 11842 / DSM 20081 / BCRC 10696 / JCM 1002 / NBRC 13953 / NCIMB 11778 / NCTC 12712 / WDCM 00102 / Lb 14</strain>
    </source>
</reference>
<dbReference type="EMBL" id="CR954253">
    <property type="protein sequence ID" value="CAI97242.1"/>
    <property type="molecule type" value="Genomic_DNA"/>
</dbReference>
<dbReference type="RefSeq" id="WP_003622472.1">
    <property type="nucleotide sequence ID" value="NZ_JQAV01000001.1"/>
</dbReference>
<dbReference type="SMR" id="Q1GBK7"/>
<dbReference type="STRING" id="390333.Ldb0407"/>
<dbReference type="KEGG" id="ldb:Ldb0407"/>
<dbReference type="PATRIC" id="fig|390333.13.peg.383"/>
<dbReference type="eggNOG" id="COG0198">
    <property type="taxonomic scope" value="Bacteria"/>
</dbReference>
<dbReference type="HOGENOM" id="CLU_093315_3_0_9"/>
<dbReference type="BioCyc" id="LDEL390333:LDB_RS01730-MONOMER"/>
<dbReference type="Proteomes" id="UP000001259">
    <property type="component" value="Chromosome"/>
</dbReference>
<dbReference type="GO" id="GO:1990904">
    <property type="term" value="C:ribonucleoprotein complex"/>
    <property type="evidence" value="ECO:0007669"/>
    <property type="project" value="UniProtKB-KW"/>
</dbReference>
<dbReference type="GO" id="GO:0005840">
    <property type="term" value="C:ribosome"/>
    <property type="evidence" value="ECO:0007669"/>
    <property type="project" value="UniProtKB-KW"/>
</dbReference>
<dbReference type="GO" id="GO:0019843">
    <property type="term" value="F:rRNA binding"/>
    <property type="evidence" value="ECO:0007669"/>
    <property type="project" value="UniProtKB-UniRule"/>
</dbReference>
<dbReference type="GO" id="GO:0003735">
    <property type="term" value="F:structural constituent of ribosome"/>
    <property type="evidence" value="ECO:0007669"/>
    <property type="project" value="InterPro"/>
</dbReference>
<dbReference type="GO" id="GO:0006412">
    <property type="term" value="P:translation"/>
    <property type="evidence" value="ECO:0007669"/>
    <property type="project" value="UniProtKB-UniRule"/>
</dbReference>
<dbReference type="CDD" id="cd06089">
    <property type="entry name" value="KOW_RPL26"/>
    <property type="match status" value="1"/>
</dbReference>
<dbReference type="Gene3D" id="2.30.30.30">
    <property type="match status" value="1"/>
</dbReference>
<dbReference type="HAMAP" id="MF_01326_B">
    <property type="entry name" value="Ribosomal_uL24_B"/>
    <property type="match status" value="1"/>
</dbReference>
<dbReference type="InterPro" id="IPR005824">
    <property type="entry name" value="KOW"/>
</dbReference>
<dbReference type="InterPro" id="IPR014722">
    <property type="entry name" value="Rib_uL2_dom2"/>
</dbReference>
<dbReference type="InterPro" id="IPR003256">
    <property type="entry name" value="Ribosomal_uL24"/>
</dbReference>
<dbReference type="InterPro" id="IPR005825">
    <property type="entry name" value="Ribosomal_uL24_CS"/>
</dbReference>
<dbReference type="InterPro" id="IPR041988">
    <property type="entry name" value="Ribosomal_uL24_KOW"/>
</dbReference>
<dbReference type="InterPro" id="IPR008991">
    <property type="entry name" value="Translation_prot_SH3-like_sf"/>
</dbReference>
<dbReference type="NCBIfam" id="TIGR01079">
    <property type="entry name" value="rplX_bact"/>
    <property type="match status" value="1"/>
</dbReference>
<dbReference type="PANTHER" id="PTHR12903">
    <property type="entry name" value="MITOCHONDRIAL RIBOSOMAL PROTEIN L24"/>
    <property type="match status" value="1"/>
</dbReference>
<dbReference type="Pfam" id="PF00467">
    <property type="entry name" value="KOW"/>
    <property type="match status" value="1"/>
</dbReference>
<dbReference type="Pfam" id="PF17136">
    <property type="entry name" value="ribosomal_L24"/>
    <property type="match status" value="1"/>
</dbReference>
<dbReference type="SMART" id="SM00739">
    <property type="entry name" value="KOW"/>
    <property type="match status" value="1"/>
</dbReference>
<dbReference type="SUPFAM" id="SSF50104">
    <property type="entry name" value="Translation proteins SH3-like domain"/>
    <property type="match status" value="1"/>
</dbReference>
<dbReference type="PROSITE" id="PS01108">
    <property type="entry name" value="RIBOSOMAL_L24"/>
    <property type="match status" value="1"/>
</dbReference>
<feature type="chain" id="PRO_1000052234" description="Large ribosomal subunit protein uL24">
    <location>
        <begin position="1"/>
        <end position="79"/>
    </location>
</feature>
<proteinExistence type="inferred from homology"/>
<keyword id="KW-1185">Reference proteome</keyword>
<keyword id="KW-0687">Ribonucleoprotein</keyword>
<keyword id="KW-0689">Ribosomal protein</keyword>
<keyword id="KW-0694">RNA-binding</keyword>
<keyword id="KW-0699">rRNA-binding</keyword>
<protein>
    <recommendedName>
        <fullName evidence="1">Large ribosomal subunit protein uL24</fullName>
    </recommendedName>
    <alternativeName>
        <fullName evidence="2">50S ribosomal protein L24</fullName>
    </alternativeName>
</protein>
<organism>
    <name type="scientific">Lactobacillus delbrueckii subsp. bulgaricus (strain ATCC 11842 / DSM 20081 / BCRC 10696 / JCM 1002 / NBRC 13953 / NCIMB 11778 / NCTC 12712 / WDCM 00102 / Lb 14)</name>
    <dbReference type="NCBI Taxonomy" id="390333"/>
    <lineage>
        <taxon>Bacteria</taxon>
        <taxon>Bacillati</taxon>
        <taxon>Bacillota</taxon>
        <taxon>Bacilli</taxon>
        <taxon>Lactobacillales</taxon>
        <taxon>Lactobacillaceae</taxon>
        <taxon>Lactobacillus</taxon>
    </lineage>
</organism>
<name>RL24_LACDA</name>
<evidence type="ECO:0000255" key="1">
    <source>
        <dbReference type="HAMAP-Rule" id="MF_01326"/>
    </source>
</evidence>
<evidence type="ECO:0000305" key="2"/>
<sequence>MFVKTGDKVKVIAGSEKGKEGTVLSVNVKENRVVVKGVNMIKKATKASASNANGGVVETEGSIHASNVKVIAKAESNKD</sequence>
<comment type="function">
    <text evidence="1">One of two assembly initiator proteins, it binds directly to the 5'-end of the 23S rRNA, where it nucleates assembly of the 50S subunit.</text>
</comment>
<comment type="function">
    <text evidence="1">One of the proteins that surrounds the polypeptide exit tunnel on the outside of the subunit.</text>
</comment>
<comment type="subunit">
    <text evidence="1">Part of the 50S ribosomal subunit.</text>
</comment>
<comment type="similarity">
    <text evidence="1">Belongs to the universal ribosomal protein uL24 family.</text>
</comment>